<name>DNSL2_MOUSE</name>
<protein>
    <recommendedName>
        <fullName>Deoxyribonuclease-1-like 2</fullName>
        <ecNumber>3.1.21.-</ecNumber>
    </recommendedName>
    <alternativeName>
        <fullName>Deoxyribonuclease I-like 2</fullName>
        <shortName>DNase I-like 2</shortName>
    </alternativeName>
</protein>
<sequence length="278" mass="31138">MGWPWAPLTAVWALGVMGATALRIGAFNVQSFGDNKVSDPDCGSVIAQILAGYDIALVQEVRDPDLSAVSLLMEQINRVSKHEYGFVSSKPLGRDQYKEMYLFVYRKDVASVVSTYQYPDPEDAFSREPFVVKFSVPSCATKELVLIPLHAAPHQAVAEIDALYDVYLDVIDKWNTDDMLFLGDFNADCKYVKAHDWPSIRLRSSEVFKWLIPDSADTTVGNSDCAYDRIVVSGAHLRRSLKPHSASVHNFQEEFDLDQTQALAISDHFPVEVTFKTH</sequence>
<gene>
    <name type="primary">Dnase1l2</name>
</gene>
<reference key="1">
    <citation type="journal article" date="2005" name="Science">
        <title>The transcriptional landscape of the mammalian genome.</title>
        <authorList>
            <person name="Carninci P."/>
            <person name="Kasukawa T."/>
            <person name="Katayama S."/>
            <person name="Gough J."/>
            <person name="Frith M.C."/>
            <person name="Maeda N."/>
            <person name="Oyama R."/>
            <person name="Ravasi T."/>
            <person name="Lenhard B."/>
            <person name="Wells C."/>
            <person name="Kodzius R."/>
            <person name="Shimokawa K."/>
            <person name="Bajic V.B."/>
            <person name="Brenner S.E."/>
            <person name="Batalov S."/>
            <person name="Forrest A.R."/>
            <person name="Zavolan M."/>
            <person name="Davis M.J."/>
            <person name="Wilming L.G."/>
            <person name="Aidinis V."/>
            <person name="Allen J.E."/>
            <person name="Ambesi-Impiombato A."/>
            <person name="Apweiler R."/>
            <person name="Aturaliya R.N."/>
            <person name="Bailey T.L."/>
            <person name="Bansal M."/>
            <person name="Baxter L."/>
            <person name="Beisel K.W."/>
            <person name="Bersano T."/>
            <person name="Bono H."/>
            <person name="Chalk A.M."/>
            <person name="Chiu K.P."/>
            <person name="Choudhary V."/>
            <person name="Christoffels A."/>
            <person name="Clutterbuck D.R."/>
            <person name="Crowe M.L."/>
            <person name="Dalla E."/>
            <person name="Dalrymple B.P."/>
            <person name="de Bono B."/>
            <person name="Della Gatta G."/>
            <person name="di Bernardo D."/>
            <person name="Down T."/>
            <person name="Engstrom P."/>
            <person name="Fagiolini M."/>
            <person name="Faulkner G."/>
            <person name="Fletcher C.F."/>
            <person name="Fukushima T."/>
            <person name="Furuno M."/>
            <person name="Futaki S."/>
            <person name="Gariboldi M."/>
            <person name="Georgii-Hemming P."/>
            <person name="Gingeras T.R."/>
            <person name="Gojobori T."/>
            <person name="Green R.E."/>
            <person name="Gustincich S."/>
            <person name="Harbers M."/>
            <person name="Hayashi Y."/>
            <person name="Hensch T.K."/>
            <person name="Hirokawa N."/>
            <person name="Hill D."/>
            <person name="Huminiecki L."/>
            <person name="Iacono M."/>
            <person name="Ikeo K."/>
            <person name="Iwama A."/>
            <person name="Ishikawa T."/>
            <person name="Jakt M."/>
            <person name="Kanapin A."/>
            <person name="Katoh M."/>
            <person name="Kawasawa Y."/>
            <person name="Kelso J."/>
            <person name="Kitamura H."/>
            <person name="Kitano H."/>
            <person name="Kollias G."/>
            <person name="Krishnan S.P."/>
            <person name="Kruger A."/>
            <person name="Kummerfeld S.K."/>
            <person name="Kurochkin I.V."/>
            <person name="Lareau L.F."/>
            <person name="Lazarevic D."/>
            <person name="Lipovich L."/>
            <person name="Liu J."/>
            <person name="Liuni S."/>
            <person name="McWilliam S."/>
            <person name="Madan Babu M."/>
            <person name="Madera M."/>
            <person name="Marchionni L."/>
            <person name="Matsuda H."/>
            <person name="Matsuzawa S."/>
            <person name="Miki H."/>
            <person name="Mignone F."/>
            <person name="Miyake S."/>
            <person name="Morris K."/>
            <person name="Mottagui-Tabar S."/>
            <person name="Mulder N."/>
            <person name="Nakano N."/>
            <person name="Nakauchi H."/>
            <person name="Ng P."/>
            <person name="Nilsson R."/>
            <person name="Nishiguchi S."/>
            <person name="Nishikawa S."/>
            <person name="Nori F."/>
            <person name="Ohara O."/>
            <person name="Okazaki Y."/>
            <person name="Orlando V."/>
            <person name="Pang K.C."/>
            <person name="Pavan W.J."/>
            <person name="Pavesi G."/>
            <person name="Pesole G."/>
            <person name="Petrovsky N."/>
            <person name="Piazza S."/>
            <person name="Reed J."/>
            <person name="Reid J.F."/>
            <person name="Ring B.Z."/>
            <person name="Ringwald M."/>
            <person name="Rost B."/>
            <person name="Ruan Y."/>
            <person name="Salzberg S.L."/>
            <person name="Sandelin A."/>
            <person name="Schneider C."/>
            <person name="Schoenbach C."/>
            <person name="Sekiguchi K."/>
            <person name="Semple C.A."/>
            <person name="Seno S."/>
            <person name="Sessa L."/>
            <person name="Sheng Y."/>
            <person name="Shibata Y."/>
            <person name="Shimada H."/>
            <person name="Shimada K."/>
            <person name="Silva D."/>
            <person name="Sinclair B."/>
            <person name="Sperling S."/>
            <person name="Stupka E."/>
            <person name="Sugiura K."/>
            <person name="Sultana R."/>
            <person name="Takenaka Y."/>
            <person name="Taki K."/>
            <person name="Tammoja K."/>
            <person name="Tan S.L."/>
            <person name="Tang S."/>
            <person name="Taylor M.S."/>
            <person name="Tegner J."/>
            <person name="Teichmann S.A."/>
            <person name="Ueda H.R."/>
            <person name="van Nimwegen E."/>
            <person name="Verardo R."/>
            <person name="Wei C.L."/>
            <person name="Yagi K."/>
            <person name="Yamanishi H."/>
            <person name="Zabarovsky E."/>
            <person name="Zhu S."/>
            <person name="Zimmer A."/>
            <person name="Hide W."/>
            <person name="Bult C."/>
            <person name="Grimmond S.M."/>
            <person name="Teasdale R.D."/>
            <person name="Liu E.T."/>
            <person name="Brusic V."/>
            <person name="Quackenbush J."/>
            <person name="Wahlestedt C."/>
            <person name="Mattick J.S."/>
            <person name="Hume D.A."/>
            <person name="Kai C."/>
            <person name="Sasaki D."/>
            <person name="Tomaru Y."/>
            <person name="Fukuda S."/>
            <person name="Kanamori-Katayama M."/>
            <person name="Suzuki M."/>
            <person name="Aoki J."/>
            <person name="Arakawa T."/>
            <person name="Iida J."/>
            <person name="Imamura K."/>
            <person name="Itoh M."/>
            <person name="Kato T."/>
            <person name="Kawaji H."/>
            <person name="Kawagashira N."/>
            <person name="Kawashima T."/>
            <person name="Kojima M."/>
            <person name="Kondo S."/>
            <person name="Konno H."/>
            <person name="Nakano K."/>
            <person name="Ninomiya N."/>
            <person name="Nishio T."/>
            <person name="Okada M."/>
            <person name="Plessy C."/>
            <person name="Shibata K."/>
            <person name="Shiraki T."/>
            <person name="Suzuki S."/>
            <person name="Tagami M."/>
            <person name="Waki K."/>
            <person name="Watahiki A."/>
            <person name="Okamura-Oho Y."/>
            <person name="Suzuki H."/>
            <person name="Kawai J."/>
            <person name="Hayashizaki Y."/>
        </authorList>
    </citation>
    <scope>NUCLEOTIDE SEQUENCE [LARGE SCALE MRNA]</scope>
    <source>
        <strain>C57BL/6J</strain>
        <tissue>Skin</tissue>
    </source>
</reference>
<reference key="2">
    <citation type="journal article" date="2004" name="Genome Res.">
        <title>The status, quality, and expansion of the NIH full-length cDNA project: the Mammalian Gene Collection (MGC).</title>
        <authorList>
            <consortium name="The MGC Project Team"/>
        </authorList>
    </citation>
    <scope>NUCLEOTIDE SEQUENCE [LARGE SCALE MRNA]</scope>
</reference>
<organism>
    <name type="scientific">Mus musculus</name>
    <name type="common">Mouse</name>
    <dbReference type="NCBI Taxonomy" id="10090"/>
    <lineage>
        <taxon>Eukaryota</taxon>
        <taxon>Metazoa</taxon>
        <taxon>Chordata</taxon>
        <taxon>Craniata</taxon>
        <taxon>Vertebrata</taxon>
        <taxon>Euteleostomi</taxon>
        <taxon>Mammalia</taxon>
        <taxon>Eutheria</taxon>
        <taxon>Euarchontoglires</taxon>
        <taxon>Glires</taxon>
        <taxon>Rodentia</taxon>
        <taxon>Myomorpha</taxon>
        <taxon>Muroidea</taxon>
        <taxon>Muridae</taxon>
        <taxon>Murinae</taxon>
        <taxon>Mus</taxon>
        <taxon>Mus</taxon>
    </lineage>
</organism>
<keyword id="KW-0106">Calcium</keyword>
<keyword id="KW-0963">Cytoplasm</keyword>
<keyword id="KW-1015">Disulfide bond</keyword>
<keyword id="KW-0255">Endonuclease</keyword>
<keyword id="KW-0378">Hydrolase</keyword>
<keyword id="KW-0460">Magnesium</keyword>
<keyword id="KW-0479">Metal-binding</keyword>
<keyword id="KW-0540">Nuclease</keyword>
<keyword id="KW-1185">Reference proteome</keyword>
<keyword id="KW-0964">Secreted</keyword>
<keyword id="KW-0732">Signal</keyword>
<proteinExistence type="evidence at transcript level"/>
<evidence type="ECO:0000250" key="1"/>
<evidence type="ECO:0000255" key="2"/>
<evidence type="ECO:0000305" key="3"/>
<accession>Q9D1G0</accession>
<accession>Q3KQI2</accession>
<accession>Q9D645</accession>
<dbReference type="EC" id="3.1.21.-"/>
<dbReference type="EMBL" id="AK003619">
    <property type="protein sequence ID" value="BAB22893.1"/>
    <property type="molecule type" value="mRNA"/>
</dbReference>
<dbReference type="EMBL" id="AK014633">
    <property type="protein sequence ID" value="BAB29476.1"/>
    <property type="molecule type" value="mRNA"/>
</dbReference>
<dbReference type="EMBL" id="BC106188">
    <property type="protein sequence ID" value="AAI06189.1"/>
    <property type="molecule type" value="mRNA"/>
</dbReference>
<dbReference type="CCDS" id="CCDS37489.1"/>
<dbReference type="RefSeq" id="NP_079994.2">
    <property type="nucleotide sequence ID" value="NM_025718.4"/>
</dbReference>
<dbReference type="SMR" id="Q9D1G0"/>
<dbReference type="BioGRID" id="211658">
    <property type="interactions" value="1"/>
</dbReference>
<dbReference type="FunCoup" id="Q9D1G0">
    <property type="interactions" value="608"/>
</dbReference>
<dbReference type="IntAct" id="Q9D1G0">
    <property type="interactions" value="1"/>
</dbReference>
<dbReference type="STRING" id="10090.ENSMUSP00000085862"/>
<dbReference type="iPTMnet" id="Q9D1G0"/>
<dbReference type="PhosphoSitePlus" id="Q9D1G0"/>
<dbReference type="PaxDb" id="10090-ENSMUSP00000085862"/>
<dbReference type="ProteomicsDB" id="279554"/>
<dbReference type="Antibodypedia" id="51835">
    <property type="antibodies" value="55 antibodies from 12 providers"/>
</dbReference>
<dbReference type="DNASU" id="66705"/>
<dbReference type="Ensembl" id="ENSMUST00000088506.12">
    <property type="protein sequence ID" value="ENSMUSP00000085862.6"/>
    <property type="gene ID" value="ENSMUSG00000024136.15"/>
</dbReference>
<dbReference type="Ensembl" id="ENSMUST00000119932.8">
    <property type="protein sequence ID" value="ENSMUSP00000113508.2"/>
    <property type="gene ID" value="ENSMUSG00000024136.15"/>
</dbReference>
<dbReference type="GeneID" id="66705"/>
<dbReference type="KEGG" id="mmu:66705"/>
<dbReference type="UCSC" id="uc008avw.1">
    <property type="organism name" value="mouse"/>
</dbReference>
<dbReference type="AGR" id="MGI:1913955"/>
<dbReference type="CTD" id="1775"/>
<dbReference type="MGI" id="MGI:1913955">
    <property type="gene designation" value="Dnase1l2"/>
</dbReference>
<dbReference type="VEuPathDB" id="HostDB:ENSMUSG00000024136"/>
<dbReference type="eggNOG" id="ENOG502SGB6">
    <property type="taxonomic scope" value="Eukaryota"/>
</dbReference>
<dbReference type="GeneTree" id="ENSGT00950000182846"/>
<dbReference type="HOGENOM" id="CLU_043335_2_1_1"/>
<dbReference type="InParanoid" id="Q9D1G0"/>
<dbReference type="OMA" id="DCSYVRE"/>
<dbReference type="OrthoDB" id="10061407at2759"/>
<dbReference type="PhylomeDB" id="Q9D1G0"/>
<dbReference type="TreeFam" id="TF329541"/>
<dbReference type="BioGRID-ORCS" id="66705">
    <property type="hits" value="4 hits in 79 CRISPR screens"/>
</dbReference>
<dbReference type="ChiTaRS" id="Dnase1l2">
    <property type="organism name" value="mouse"/>
</dbReference>
<dbReference type="PRO" id="PR:Q9D1G0"/>
<dbReference type="Proteomes" id="UP000000589">
    <property type="component" value="Chromosome 17"/>
</dbReference>
<dbReference type="RNAct" id="Q9D1G0">
    <property type="molecule type" value="protein"/>
</dbReference>
<dbReference type="Bgee" id="ENSMUSG00000024136">
    <property type="expression patterns" value="Expressed in lip and 95 other cell types or tissues"/>
</dbReference>
<dbReference type="ExpressionAtlas" id="Q9D1G0">
    <property type="expression patterns" value="baseline and differential"/>
</dbReference>
<dbReference type="GO" id="GO:0005737">
    <property type="term" value="C:cytoplasm"/>
    <property type="evidence" value="ECO:0007669"/>
    <property type="project" value="UniProtKB-SubCell"/>
</dbReference>
<dbReference type="GO" id="GO:0005576">
    <property type="term" value="C:extracellular region"/>
    <property type="evidence" value="ECO:0007669"/>
    <property type="project" value="UniProtKB-SubCell"/>
</dbReference>
<dbReference type="GO" id="GO:0004536">
    <property type="term" value="F:DNA nuclease activity"/>
    <property type="evidence" value="ECO:0000305"/>
    <property type="project" value="MGI"/>
</dbReference>
<dbReference type="GO" id="GO:0004519">
    <property type="term" value="F:endonuclease activity"/>
    <property type="evidence" value="ECO:0007669"/>
    <property type="project" value="UniProtKB-KW"/>
</dbReference>
<dbReference type="GO" id="GO:0046872">
    <property type="term" value="F:metal ion binding"/>
    <property type="evidence" value="ECO:0007669"/>
    <property type="project" value="UniProtKB-KW"/>
</dbReference>
<dbReference type="GO" id="GO:0003335">
    <property type="term" value="P:corneocyte development"/>
    <property type="evidence" value="ECO:0000315"/>
    <property type="project" value="MGI"/>
</dbReference>
<dbReference type="GO" id="GO:0006308">
    <property type="term" value="P:DNA catabolic process"/>
    <property type="evidence" value="ECO:0000315"/>
    <property type="project" value="MGI"/>
</dbReference>
<dbReference type="GO" id="GO:0001942">
    <property type="term" value="P:hair follicle development"/>
    <property type="evidence" value="ECO:0000315"/>
    <property type="project" value="MGI"/>
</dbReference>
<dbReference type="CDD" id="cd10282">
    <property type="entry name" value="DNase1"/>
    <property type="match status" value="1"/>
</dbReference>
<dbReference type="FunFam" id="3.60.10.10:FF:000047">
    <property type="entry name" value="Deoxyribonuclease"/>
    <property type="match status" value="1"/>
</dbReference>
<dbReference type="Gene3D" id="3.60.10.10">
    <property type="entry name" value="Endonuclease/exonuclease/phosphatase"/>
    <property type="match status" value="1"/>
</dbReference>
<dbReference type="InterPro" id="IPR018057">
    <property type="entry name" value="Deoxyribonuclease-1_AS"/>
</dbReference>
<dbReference type="InterPro" id="IPR016202">
    <property type="entry name" value="DNase_I"/>
</dbReference>
<dbReference type="InterPro" id="IPR033125">
    <property type="entry name" value="DNASE_I_2"/>
</dbReference>
<dbReference type="InterPro" id="IPR036691">
    <property type="entry name" value="Endo/exonu/phosph_ase_sf"/>
</dbReference>
<dbReference type="InterPro" id="IPR005135">
    <property type="entry name" value="Endo/exonuclease/phosphatase"/>
</dbReference>
<dbReference type="PANTHER" id="PTHR11371">
    <property type="entry name" value="DEOXYRIBONUCLEASE"/>
    <property type="match status" value="1"/>
</dbReference>
<dbReference type="PANTHER" id="PTHR11371:SF29">
    <property type="entry name" value="DEOXYRIBONUCLEASE-1-LIKE 2"/>
    <property type="match status" value="1"/>
</dbReference>
<dbReference type="Pfam" id="PF03372">
    <property type="entry name" value="Exo_endo_phos"/>
    <property type="match status" value="1"/>
</dbReference>
<dbReference type="PIRSF" id="PIRSF000988">
    <property type="entry name" value="DNase_I_euk"/>
    <property type="match status" value="1"/>
</dbReference>
<dbReference type="PRINTS" id="PR00130">
    <property type="entry name" value="DNASEI"/>
</dbReference>
<dbReference type="SMART" id="SM00476">
    <property type="entry name" value="DNaseIc"/>
    <property type="match status" value="1"/>
</dbReference>
<dbReference type="SUPFAM" id="SSF56219">
    <property type="entry name" value="DNase I-like"/>
    <property type="match status" value="1"/>
</dbReference>
<dbReference type="PROSITE" id="PS00919">
    <property type="entry name" value="DNASE_I_1"/>
    <property type="match status" value="1"/>
</dbReference>
<dbReference type="PROSITE" id="PS00918">
    <property type="entry name" value="DNASE_I_2"/>
    <property type="match status" value="1"/>
</dbReference>
<feature type="signal peptide" evidence="2">
    <location>
        <begin position="1"/>
        <end position="21"/>
    </location>
</feature>
<feature type="chain" id="PRO_0000007287" description="Deoxyribonuclease-1-like 2">
    <location>
        <begin position="22"/>
        <end position="278"/>
    </location>
</feature>
<feature type="active site" evidence="1">
    <location>
        <position position="99"/>
    </location>
</feature>
<feature type="active site" evidence="1">
    <location>
        <position position="150"/>
    </location>
</feature>
<feature type="disulfide bond" description="Essential for enzymatic activity" evidence="1">
    <location>
        <begin position="189"/>
        <end position="225"/>
    </location>
</feature>
<feature type="sequence conflict" description="In Ref. 1; BAB29476." evidence="3" ref="1">
    <original>G</original>
    <variation>C</variation>
    <location>
        <position position="183"/>
    </location>
</feature>
<feature type="sequence conflict" description="In Ref. 1; BAB29476." evidence="3" ref="1">
    <original>D</original>
    <variation>H</variation>
    <location>
        <position position="217"/>
    </location>
</feature>
<comment type="function">
    <text evidence="1">Divalent cation-dependent acid DNA endonuclease involved in the breakdown of the nucleus during corneocyte formation of epidermal keratinocytes. May play an immune role by eliminating harmful DNA released into the extracellular environment by damaged epidermal cells (By similarity).</text>
</comment>
<comment type="cofactor">
    <cofactor evidence="1">
        <name>Mg(2+)</name>
        <dbReference type="ChEBI" id="CHEBI:18420"/>
    </cofactor>
</comment>
<comment type="cofactor">
    <cofactor evidence="1">
        <name>Ca(2+)</name>
        <dbReference type="ChEBI" id="CHEBI:29108"/>
    </cofactor>
</comment>
<comment type="subcellular location">
    <subcellularLocation>
        <location evidence="1">Cytoplasm</location>
    </subcellularLocation>
    <subcellularLocation>
        <location evidence="3">Secreted</location>
    </subcellularLocation>
</comment>
<comment type="similarity">
    <text evidence="3">Belongs to the DNase I family.</text>
</comment>